<reference key="1">
    <citation type="journal article" date="2005" name="J. Bacteriol.">
        <title>Complete genome sequence and analysis of the multiresistant nosocomial pathogen Corynebacterium jeikeium K411, a lipid-requiring bacterium of the human skin flora.</title>
        <authorList>
            <person name="Tauch A."/>
            <person name="Kaiser O."/>
            <person name="Hain T."/>
            <person name="Goesmann A."/>
            <person name="Weisshaar B."/>
            <person name="Albersmeier A."/>
            <person name="Bekel T."/>
            <person name="Bischoff N."/>
            <person name="Brune I."/>
            <person name="Chakraborty T."/>
            <person name="Kalinowski J."/>
            <person name="Meyer F."/>
            <person name="Rupp O."/>
            <person name="Schneiker S."/>
            <person name="Viehoever P."/>
            <person name="Puehler A."/>
        </authorList>
    </citation>
    <scope>NUCLEOTIDE SEQUENCE [LARGE SCALE GENOMIC DNA]</scope>
    <source>
        <strain>K411</strain>
    </source>
</reference>
<protein>
    <recommendedName>
        <fullName evidence="1">Large ribosomal subunit protein bL35</fullName>
    </recommendedName>
    <alternativeName>
        <fullName evidence="3">50S ribosomal protein L35</fullName>
    </alternativeName>
</protein>
<proteinExistence type="inferred from homology"/>
<gene>
    <name evidence="1" type="primary">rpmI</name>
    <name type="ordered locus">jk0835</name>
</gene>
<dbReference type="EMBL" id="CR931997">
    <property type="protein sequence ID" value="CAI36997.1"/>
    <property type="molecule type" value="Genomic_DNA"/>
</dbReference>
<dbReference type="RefSeq" id="WP_005295736.1">
    <property type="nucleotide sequence ID" value="NC_007164.1"/>
</dbReference>
<dbReference type="SMR" id="Q4JW10"/>
<dbReference type="STRING" id="306537.jk0835"/>
<dbReference type="GeneID" id="92738359"/>
<dbReference type="KEGG" id="cjk:jk0835"/>
<dbReference type="eggNOG" id="COG0291">
    <property type="taxonomic scope" value="Bacteria"/>
</dbReference>
<dbReference type="HOGENOM" id="CLU_169643_4_2_11"/>
<dbReference type="OrthoDB" id="9804851at2"/>
<dbReference type="Proteomes" id="UP000000545">
    <property type="component" value="Chromosome"/>
</dbReference>
<dbReference type="GO" id="GO:0022625">
    <property type="term" value="C:cytosolic large ribosomal subunit"/>
    <property type="evidence" value="ECO:0007669"/>
    <property type="project" value="TreeGrafter"/>
</dbReference>
<dbReference type="GO" id="GO:0003735">
    <property type="term" value="F:structural constituent of ribosome"/>
    <property type="evidence" value="ECO:0007669"/>
    <property type="project" value="InterPro"/>
</dbReference>
<dbReference type="GO" id="GO:0006412">
    <property type="term" value="P:translation"/>
    <property type="evidence" value="ECO:0007669"/>
    <property type="project" value="UniProtKB-UniRule"/>
</dbReference>
<dbReference type="FunFam" id="4.10.410.60:FF:000001">
    <property type="entry name" value="50S ribosomal protein L35"/>
    <property type="match status" value="1"/>
</dbReference>
<dbReference type="Gene3D" id="4.10.410.60">
    <property type="match status" value="1"/>
</dbReference>
<dbReference type="HAMAP" id="MF_00514">
    <property type="entry name" value="Ribosomal_bL35"/>
    <property type="match status" value="1"/>
</dbReference>
<dbReference type="InterPro" id="IPR001706">
    <property type="entry name" value="Ribosomal_bL35"/>
</dbReference>
<dbReference type="InterPro" id="IPR021137">
    <property type="entry name" value="Ribosomal_bL35-like"/>
</dbReference>
<dbReference type="InterPro" id="IPR018265">
    <property type="entry name" value="Ribosomal_bL35_CS"/>
</dbReference>
<dbReference type="InterPro" id="IPR037229">
    <property type="entry name" value="Ribosomal_bL35_sf"/>
</dbReference>
<dbReference type="NCBIfam" id="TIGR00001">
    <property type="entry name" value="rpmI_bact"/>
    <property type="match status" value="1"/>
</dbReference>
<dbReference type="PANTHER" id="PTHR33343">
    <property type="entry name" value="54S RIBOSOMAL PROTEIN BL35M"/>
    <property type="match status" value="1"/>
</dbReference>
<dbReference type="PANTHER" id="PTHR33343:SF1">
    <property type="entry name" value="LARGE RIBOSOMAL SUBUNIT PROTEIN BL35M"/>
    <property type="match status" value="1"/>
</dbReference>
<dbReference type="Pfam" id="PF01632">
    <property type="entry name" value="Ribosomal_L35p"/>
    <property type="match status" value="1"/>
</dbReference>
<dbReference type="PRINTS" id="PR00064">
    <property type="entry name" value="RIBOSOMALL35"/>
</dbReference>
<dbReference type="SUPFAM" id="SSF143034">
    <property type="entry name" value="L35p-like"/>
    <property type="match status" value="1"/>
</dbReference>
<dbReference type="PROSITE" id="PS00936">
    <property type="entry name" value="RIBOSOMAL_L35"/>
    <property type="match status" value="1"/>
</dbReference>
<name>RL35_CORJK</name>
<organism>
    <name type="scientific">Corynebacterium jeikeium (strain K411)</name>
    <dbReference type="NCBI Taxonomy" id="306537"/>
    <lineage>
        <taxon>Bacteria</taxon>
        <taxon>Bacillati</taxon>
        <taxon>Actinomycetota</taxon>
        <taxon>Actinomycetes</taxon>
        <taxon>Mycobacteriales</taxon>
        <taxon>Corynebacteriaceae</taxon>
        <taxon>Corynebacterium</taxon>
    </lineage>
</organism>
<accession>Q4JW10</accession>
<keyword id="KW-1185">Reference proteome</keyword>
<keyword id="KW-0687">Ribonucleoprotein</keyword>
<keyword id="KW-0689">Ribosomal protein</keyword>
<sequence length="64" mass="7274">MKQKTHKGAAKRIKISGSGKLRREQANRRHLLEGKPSKRTRRLKGTEDVAPADVKRMKRLLGKA</sequence>
<feature type="chain" id="PRO_0000258664" description="Large ribosomal subunit protein bL35">
    <location>
        <begin position="1"/>
        <end position="64"/>
    </location>
</feature>
<feature type="region of interest" description="Disordered" evidence="2">
    <location>
        <begin position="1"/>
        <end position="50"/>
    </location>
</feature>
<feature type="compositionally biased region" description="Basic residues" evidence="2">
    <location>
        <begin position="1"/>
        <end position="14"/>
    </location>
</feature>
<feature type="compositionally biased region" description="Basic and acidic residues" evidence="2">
    <location>
        <begin position="21"/>
        <end position="36"/>
    </location>
</feature>
<evidence type="ECO:0000255" key="1">
    <source>
        <dbReference type="HAMAP-Rule" id="MF_00514"/>
    </source>
</evidence>
<evidence type="ECO:0000256" key="2">
    <source>
        <dbReference type="SAM" id="MobiDB-lite"/>
    </source>
</evidence>
<evidence type="ECO:0000305" key="3"/>
<comment type="similarity">
    <text evidence="1">Belongs to the bacterial ribosomal protein bL35 family.</text>
</comment>